<keyword id="KW-0186">Copper</keyword>
<keyword id="KW-0249">Electron transport</keyword>
<keyword id="KW-0460">Magnesium</keyword>
<keyword id="KW-0472">Membrane</keyword>
<keyword id="KW-0479">Metal-binding</keyword>
<keyword id="KW-0496">Mitochondrion</keyword>
<keyword id="KW-0999">Mitochondrion inner membrane</keyword>
<keyword id="KW-1185">Reference proteome</keyword>
<keyword id="KW-0679">Respiratory chain</keyword>
<keyword id="KW-1278">Translocase</keyword>
<keyword id="KW-0812">Transmembrane</keyword>
<keyword id="KW-1133">Transmembrane helix</keyword>
<keyword id="KW-0813">Transport</keyword>
<proteinExistence type="inferred from homology"/>
<comment type="function">
    <text evidence="1">Component of the cytochrome c oxidase, the last enzyme in the mitochondrial electron transport chain which drives oxidative phosphorylation. The respiratory chain contains 3 multisubunit complexes succinate dehydrogenase (complex II, CII), ubiquinol-cytochrome c oxidoreductase (cytochrome b-c1 complex, complex III, CIII) and cytochrome c oxidase (complex IV, CIV), that cooperate to transfer electrons derived from NADH and succinate to molecular oxygen, creating an electrochemical gradient over the inner membrane that drives transmembrane transport and the ATP synthase. Cytochrome c oxidase is the component of the respiratory chain that catalyzes the reduction of oxygen to water. Electrons originating from reduced cytochrome c in the intermembrane space (IMS) are transferred via the dinuclear copper A center (CU(A)) of subunit 2 and heme A of subunit 1 to the active site in subunit 1, a binuclear center (BNC) formed by heme A3 and copper B (CU(B)). The BNC reduces molecular oxygen to 2 water molecules using 4 electrons from cytochrome c in the IMS and 4 protons from the mitochondrial matrix.</text>
</comment>
<comment type="catalytic activity">
    <reaction evidence="1">
        <text>4 Fe(II)-[cytochrome c] + O2 + 8 H(+)(in) = 4 Fe(III)-[cytochrome c] + 2 H2O + 4 H(+)(out)</text>
        <dbReference type="Rhea" id="RHEA:11436"/>
        <dbReference type="Rhea" id="RHEA-COMP:10350"/>
        <dbReference type="Rhea" id="RHEA-COMP:14399"/>
        <dbReference type="ChEBI" id="CHEBI:15377"/>
        <dbReference type="ChEBI" id="CHEBI:15378"/>
        <dbReference type="ChEBI" id="CHEBI:15379"/>
        <dbReference type="ChEBI" id="CHEBI:29033"/>
        <dbReference type="ChEBI" id="CHEBI:29034"/>
        <dbReference type="EC" id="7.1.1.9"/>
    </reaction>
    <physiologicalReaction direction="left-to-right" evidence="1">
        <dbReference type="Rhea" id="RHEA:11437"/>
    </physiologicalReaction>
</comment>
<comment type="cofactor">
    <cofactor evidence="1">
        <name>Cu cation</name>
        <dbReference type="ChEBI" id="CHEBI:23378"/>
    </cofactor>
    <text evidence="1">Binds a dinuclear copper A center per subunit.</text>
</comment>
<comment type="subunit">
    <text evidence="1">Component of the cytochrome c oxidase (complex IV, CIV), a multisubunit enzyme composed of a catalytic core of 3 subunits and several supernumerary subunits. The complex exists as a monomer or a dimer and forms supercomplexes (SCs) in the inner mitochondrial membrane with ubiquinol-cytochrome c oxidoreductase (cytochrome b-c1 complex, complex III, CIII).</text>
</comment>
<comment type="subcellular location">
    <subcellularLocation>
        <location evidence="1">Mitochondrion inner membrane</location>
        <topology evidence="1">Multi-pass membrane protein</topology>
    </subcellularLocation>
</comment>
<comment type="similarity">
    <text evidence="6">Belongs to the cytochrome c oxidase subunit 2 family.</text>
</comment>
<protein>
    <recommendedName>
        <fullName>Cytochrome c oxidase subunit 2</fullName>
        <ecNumber>7.1.1.9</ecNumber>
    </recommendedName>
    <alternativeName>
        <fullName>Cytochrome c oxidase polypeptide II</fullName>
    </alternativeName>
</protein>
<geneLocation type="mitochondrion" evidence="7"/>
<dbReference type="EC" id="7.1.1.9"/>
<dbReference type="EMBL" id="AY171103">
    <property type="protein sequence ID" value="AAO13510.1"/>
    <property type="molecule type" value="Genomic_DNA"/>
</dbReference>
<dbReference type="EMBL" id="EU407781">
    <property type="protein sequence ID" value="ACB06109.1"/>
    <property type="molecule type" value="Genomic_DNA"/>
</dbReference>
<dbReference type="EMBL" id="EU407782">
    <property type="protein sequence ID" value="ACB06121.1"/>
    <property type="molecule type" value="Genomic_DNA"/>
</dbReference>
<dbReference type="EMBL" id="EU407783">
    <property type="protein sequence ID" value="ACB06133.1"/>
    <property type="molecule type" value="Genomic_DNA"/>
</dbReference>
<dbReference type="EMBL" id="EU407784">
    <property type="protein sequence ID" value="ACB06145.1"/>
    <property type="molecule type" value="Genomic_DNA"/>
</dbReference>
<dbReference type="EMBL" id="EU407785">
    <property type="protein sequence ID" value="ACB06157.1"/>
    <property type="molecule type" value="Genomic_DNA"/>
</dbReference>
<dbReference type="EMBL" id="EU407786">
    <property type="protein sequence ID" value="ACB06169.1"/>
    <property type="molecule type" value="Genomic_DNA"/>
</dbReference>
<dbReference type="EMBL" id="EU407787">
    <property type="protein sequence ID" value="ACB06181.1"/>
    <property type="molecule type" value="Genomic_DNA"/>
</dbReference>
<dbReference type="EMBL" id="EU407788">
    <property type="protein sequence ID" value="ACB06193.1"/>
    <property type="molecule type" value="Genomic_DNA"/>
</dbReference>
<dbReference type="EMBL" id="EU407789">
    <property type="protein sequence ID" value="ACB06205.1"/>
    <property type="molecule type" value="Genomic_DNA"/>
</dbReference>
<dbReference type="EMBL" id="EU407790">
    <property type="protein sequence ID" value="ACB06217.1"/>
    <property type="molecule type" value="Genomic_DNA"/>
</dbReference>
<dbReference type="EMBL" id="EU407791">
    <property type="protein sequence ID" value="ACB06229.1"/>
    <property type="molecule type" value="Genomic_DNA"/>
</dbReference>
<dbReference type="EMBL" id="EU407792">
    <property type="protein sequence ID" value="ACB06241.1"/>
    <property type="molecule type" value="Genomic_DNA"/>
</dbReference>
<dbReference type="EMBL" id="EU407793">
    <property type="protein sequence ID" value="ACB06253.1"/>
    <property type="molecule type" value="Genomic_DNA"/>
</dbReference>
<dbReference type="EMBL" id="EU407794">
    <property type="protein sequence ID" value="ACB06265.1"/>
    <property type="molecule type" value="Genomic_DNA"/>
</dbReference>
<dbReference type="EMBL" id="EU407795">
    <property type="protein sequence ID" value="ACB06277.1"/>
    <property type="molecule type" value="Genomic_DNA"/>
</dbReference>
<dbReference type="EMBL" id="EU407796">
    <property type="protein sequence ID" value="ACB06289.1"/>
    <property type="molecule type" value="Genomic_DNA"/>
</dbReference>
<dbReference type="EMBL" id="EU407797">
    <property type="protein sequence ID" value="ACB06301.1"/>
    <property type="molecule type" value="Genomic_DNA"/>
</dbReference>
<dbReference type="EMBL" id="EU407798">
    <property type="protein sequence ID" value="ACB06313.1"/>
    <property type="molecule type" value="Genomic_DNA"/>
</dbReference>
<dbReference type="EMBL" id="EU407799">
    <property type="protein sequence ID" value="ACB06325.1"/>
    <property type="molecule type" value="Genomic_DNA"/>
</dbReference>
<dbReference type="EMBL" id="EU407800">
    <property type="protein sequence ID" value="ACB06337.1"/>
    <property type="molecule type" value="Genomic_DNA"/>
</dbReference>
<dbReference type="EMBL" id="EU407801">
    <property type="protein sequence ID" value="ACB06349.1"/>
    <property type="molecule type" value="Genomic_DNA"/>
</dbReference>
<dbReference type="EMBL" id="EU407802">
    <property type="protein sequence ID" value="ACB06361.1"/>
    <property type="molecule type" value="Genomic_DNA"/>
</dbReference>
<dbReference type="EMBL" id="EU407803">
    <property type="protein sequence ID" value="ACB06373.1"/>
    <property type="molecule type" value="Genomic_DNA"/>
</dbReference>
<dbReference type="EMBL" id="AC186293">
    <property type="status" value="NOT_ANNOTATED_CDS"/>
    <property type="molecule type" value="Genomic_DNA"/>
</dbReference>
<dbReference type="EMBL" id="AF491452">
    <property type="protein sequence ID" value="AAM09746.1"/>
    <property type="molecule type" value="Genomic_DNA"/>
</dbReference>
<dbReference type="EMBL" id="AF491453">
    <property type="protein sequence ID" value="AAM09747.1"/>
    <property type="molecule type" value="Genomic_DNA"/>
</dbReference>
<dbReference type="EMBL" id="AF491454">
    <property type="protein sequence ID" value="AAM09748.1"/>
    <property type="molecule type" value="Genomic_DNA"/>
</dbReference>
<dbReference type="EMBL" id="AF491455">
    <property type="protein sequence ID" value="AAM09749.1"/>
    <property type="molecule type" value="Genomic_DNA"/>
</dbReference>
<dbReference type="EMBL" id="AF491456">
    <property type="protein sequence ID" value="AAM09750.1"/>
    <property type="molecule type" value="Genomic_DNA"/>
</dbReference>
<dbReference type="EMBL" id="AF491457">
    <property type="protein sequence ID" value="AAM09751.1"/>
    <property type="molecule type" value="Genomic_DNA"/>
</dbReference>
<dbReference type="EMBL" id="EU254734">
    <property type="protein sequence ID" value="ABX84167.1"/>
    <property type="molecule type" value="Genomic_DNA"/>
</dbReference>
<dbReference type="EMBL" id="EU254735">
    <property type="protein sequence ID" value="ABX84168.1"/>
    <property type="molecule type" value="Genomic_DNA"/>
</dbReference>
<dbReference type="EMBL" id="EU254736">
    <property type="protein sequence ID" value="ABX84169.1"/>
    <property type="molecule type" value="Genomic_DNA"/>
</dbReference>
<dbReference type="EMBL" id="EU254737">
    <property type="protein sequence ID" value="ABX84170.1"/>
    <property type="molecule type" value="Genomic_DNA"/>
</dbReference>
<dbReference type="EMBL" id="EU254738">
    <property type="protein sequence ID" value="ABX84171.1"/>
    <property type="molecule type" value="Genomic_DNA"/>
</dbReference>
<dbReference type="EMBL" id="EU254739">
    <property type="protein sequence ID" value="ABX84172.1"/>
    <property type="molecule type" value="Genomic_DNA"/>
</dbReference>
<dbReference type="EMBL" id="EU254740">
    <property type="protein sequence ID" value="ABX84173.1"/>
    <property type="molecule type" value="Genomic_DNA"/>
</dbReference>
<dbReference type="EMBL" id="EU254741">
    <property type="protein sequence ID" value="ABX84174.1"/>
    <property type="molecule type" value="Genomic_DNA"/>
</dbReference>
<dbReference type="EMBL" id="EU254742">
    <property type="protein sequence ID" value="ABX84175.1"/>
    <property type="molecule type" value="Genomic_DNA"/>
</dbReference>
<dbReference type="EMBL" id="EU254743">
    <property type="protein sequence ID" value="ABX84176.1"/>
    <property type="molecule type" value="Genomic_DNA"/>
</dbReference>
<dbReference type="SMR" id="Q8HEC3"/>
<dbReference type="FunCoup" id="Q8HEC3">
    <property type="interactions" value="119"/>
</dbReference>
<dbReference type="STRING" id="6238.Q8HEC3"/>
<dbReference type="KEGG" id="cbr:COX2"/>
<dbReference type="CTD" id="4513"/>
<dbReference type="InParanoid" id="Q8HEC3"/>
<dbReference type="OrthoDB" id="5856331at2759"/>
<dbReference type="Proteomes" id="UP000008549">
    <property type="component" value="Mitochondrion"/>
</dbReference>
<dbReference type="GO" id="GO:0005743">
    <property type="term" value="C:mitochondrial inner membrane"/>
    <property type="evidence" value="ECO:0007669"/>
    <property type="project" value="UniProtKB-SubCell"/>
</dbReference>
<dbReference type="GO" id="GO:0005507">
    <property type="term" value="F:copper ion binding"/>
    <property type="evidence" value="ECO:0007669"/>
    <property type="project" value="InterPro"/>
</dbReference>
<dbReference type="GO" id="GO:0004129">
    <property type="term" value="F:cytochrome-c oxidase activity"/>
    <property type="evidence" value="ECO:0007669"/>
    <property type="project" value="UniProtKB-EC"/>
</dbReference>
<dbReference type="GO" id="GO:0042773">
    <property type="term" value="P:ATP synthesis coupled electron transport"/>
    <property type="evidence" value="ECO:0000318"/>
    <property type="project" value="GO_Central"/>
</dbReference>
<dbReference type="CDD" id="cd13912">
    <property type="entry name" value="CcO_II_C"/>
    <property type="match status" value="1"/>
</dbReference>
<dbReference type="FunFam" id="2.60.40.420:FF:000001">
    <property type="entry name" value="Cytochrome c oxidase subunit 2"/>
    <property type="match status" value="1"/>
</dbReference>
<dbReference type="Gene3D" id="1.10.287.90">
    <property type="match status" value="1"/>
</dbReference>
<dbReference type="Gene3D" id="2.60.40.420">
    <property type="entry name" value="Cupredoxins - blue copper proteins"/>
    <property type="match status" value="1"/>
</dbReference>
<dbReference type="InterPro" id="IPR045187">
    <property type="entry name" value="CcO_II"/>
</dbReference>
<dbReference type="InterPro" id="IPR002429">
    <property type="entry name" value="CcO_II-like_C"/>
</dbReference>
<dbReference type="InterPro" id="IPR034210">
    <property type="entry name" value="CcO_II_C"/>
</dbReference>
<dbReference type="InterPro" id="IPR001505">
    <property type="entry name" value="Copper_CuA"/>
</dbReference>
<dbReference type="InterPro" id="IPR008972">
    <property type="entry name" value="Cupredoxin"/>
</dbReference>
<dbReference type="InterPro" id="IPR011759">
    <property type="entry name" value="Cyt_c_oxidase_su2_TM_dom"/>
</dbReference>
<dbReference type="InterPro" id="IPR036257">
    <property type="entry name" value="Cyt_c_oxidase_su2_TM_sf"/>
</dbReference>
<dbReference type="PANTHER" id="PTHR22888:SF9">
    <property type="entry name" value="CYTOCHROME C OXIDASE SUBUNIT 2"/>
    <property type="match status" value="1"/>
</dbReference>
<dbReference type="PANTHER" id="PTHR22888">
    <property type="entry name" value="CYTOCHROME C OXIDASE, SUBUNIT II"/>
    <property type="match status" value="1"/>
</dbReference>
<dbReference type="Pfam" id="PF00116">
    <property type="entry name" value="COX2"/>
    <property type="match status" value="1"/>
</dbReference>
<dbReference type="PRINTS" id="PR01166">
    <property type="entry name" value="CYCOXIDASEII"/>
</dbReference>
<dbReference type="SUPFAM" id="SSF49503">
    <property type="entry name" value="Cupredoxins"/>
    <property type="match status" value="1"/>
</dbReference>
<dbReference type="SUPFAM" id="SSF81464">
    <property type="entry name" value="Cytochrome c oxidase subunit II-like, transmembrane region"/>
    <property type="match status" value="1"/>
</dbReference>
<dbReference type="PROSITE" id="PS00078">
    <property type="entry name" value="COX2"/>
    <property type="match status" value="1"/>
</dbReference>
<dbReference type="PROSITE" id="PS50857">
    <property type="entry name" value="COX2_CUA"/>
    <property type="match status" value="1"/>
</dbReference>
<dbReference type="PROSITE" id="PS50999">
    <property type="entry name" value="COX2_TM"/>
    <property type="match status" value="1"/>
</dbReference>
<accession>Q8HEC3</accession>
<accession>A9YMI3</accession>
<accession>A9YMI8</accession>
<accession>A9YMI9</accession>
<accession>B1PE42</accession>
<accession>B1PE54</accession>
<accession>B1PED8</accession>
<accession>B1PEH4</accession>
<accession>B1PEL0</accession>
<accession>Q8SEN0</accession>
<accession>Q8SFX6</accession>
<reference key="1">
    <citation type="journal article" date="2003" name="Mol. Biol. Evol.">
        <title>Phylogenetics in Caenorhabditis elegans: an analysis of divergence and outcrossing.</title>
        <authorList>
            <person name="Denver D.R."/>
            <person name="Morris K."/>
            <person name="Thomas W.K."/>
        </authorList>
    </citation>
    <scope>NUCLEOTIDE SEQUENCE [GENOMIC DNA]</scope>
    <source>
        <strain>PB800</strain>
    </source>
</reference>
<reference key="2">
    <citation type="journal article" date="2008" name="BMC Evol. Biol.">
        <title>Muller's Ratchet and compensatory mutation in Caenorhabditis briggsae mitochondrial genome evolution.</title>
        <authorList>
            <person name="Howe D.K."/>
            <person name="Denver D.R."/>
        </authorList>
    </citation>
    <scope>NUCLEOTIDE SEQUENCE [GENOMIC DNA]</scope>
    <scope>VARIANTS MET-16; THR-21; LEU-61; ALA-141 AND HIS-142</scope>
    <source>
        <strain>BW287</strain>
        <strain>ED3032</strain>
        <strain>ED3033</strain>
        <strain>ED3034</strain>
        <strain>ED3035</strain>
        <strain>ED3036</strain>
        <strain>ED3037</strain>
        <strain>ED3083</strain>
        <strain>ED3092</strain>
        <strain>ED3101</strain>
        <strain>EG4181</strain>
        <strain>EG4207A</strain>
        <strain>HK104</strain>
        <strain>HK105</strain>
        <strain>JU403</strain>
        <strain>JU439</strain>
        <strain>JU516</strain>
        <strain>JU725</strain>
        <strain>JU726</strain>
        <strain>JU793</strain>
        <strain>PB800</strain>
        <strain>PB826</strain>
        <strain>VT847</strain>
    </source>
</reference>
<reference key="3">
    <citation type="journal article" date="2003" name="PLoS Biol.">
        <title>The genome sequence of Caenorhabditis briggsae: a platform for comparative genomics.</title>
        <authorList>
            <person name="Stein L.D."/>
            <person name="Bao Z."/>
            <person name="Blasiar D."/>
            <person name="Blumenthal T."/>
            <person name="Brent M.R."/>
            <person name="Chen N."/>
            <person name="Chinwalla A."/>
            <person name="Clarke L."/>
            <person name="Clee C."/>
            <person name="Coghlan A."/>
            <person name="Coulson A."/>
            <person name="D'Eustachio P."/>
            <person name="Fitch D.H.A."/>
            <person name="Fulton L.A."/>
            <person name="Fulton R.E."/>
            <person name="Griffiths-Jones S."/>
            <person name="Harris T.W."/>
            <person name="Hillier L.W."/>
            <person name="Kamath R."/>
            <person name="Kuwabara P.E."/>
            <person name="Mardis E.R."/>
            <person name="Marra M.A."/>
            <person name="Miner T.L."/>
            <person name="Minx P."/>
            <person name="Mullikin J.C."/>
            <person name="Plumb R.W."/>
            <person name="Rogers J."/>
            <person name="Schein J.E."/>
            <person name="Sohrmann M."/>
            <person name="Spieth J."/>
            <person name="Stajich J.E."/>
            <person name="Wei C."/>
            <person name="Willey D."/>
            <person name="Wilson R.K."/>
            <person name="Durbin R.M."/>
            <person name="Waterston R.H."/>
        </authorList>
    </citation>
    <scope>NUCLEOTIDE SEQUENCE [LARGE SCALE GENOMIC DNA]</scope>
    <source>
        <strain>AF16</strain>
    </source>
</reference>
<reference evidence="6" key="4">
    <citation type="journal article" date="2002" name="Genetics">
        <title>Levels of DNA polymorphism vary with mating system in the nematode genus Caenorhabditis.</title>
        <authorList>
            <person name="Graustein A."/>
            <person name="Gaspar J.M."/>
            <person name="Walters J.R."/>
            <person name="Palopoli M.F."/>
        </authorList>
    </citation>
    <scope>NUCLEOTIDE SEQUENCE [GENOMIC DNA] OF 2-231</scope>
    <scope>VARIANT MET-16</scope>
    <source>
        <strain>AF16</strain>
        <strain>HK104</strain>
        <strain>HK105</strain>
        <strain>PB800</strain>
        <strain>PB826</strain>
        <strain>VT847</strain>
    </source>
</reference>
<reference evidence="6" key="5">
    <citation type="submission" date="2007-10" db="EMBL/GenBank/DDBJ databases">
        <title>An entomopathogenic Caenorhabditis.</title>
        <authorList>
            <person name="Thomas W.K."/>
            <person name="Abebe E.B."/>
            <person name="Jumba M."/>
            <person name="Gray V."/>
            <person name="Bonner K."/>
            <person name="Morris K."/>
        </authorList>
    </citation>
    <scope>NUCLEOTIDE SEQUENCE [GENOMIC DNA] OF 7-230</scope>
    <scope>VARIANT MET-16</scope>
    <source>
        <strain>AF16</strain>
        <strain>DR1690</strain>
        <strain>HK104</strain>
        <strain>HK105</strain>
        <strain>JU725</strain>
        <strain>JU726</strain>
        <strain>KT0001</strain>
        <strain>PB800</strain>
        <strain>PB826</strain>
        <strain>VT847</strain>
    </source>
</reference>
<sequence length="231" mass="26590">MNNFFQGYNLLFQHSLFASYMDWFHAFNCSLLLGVLVFVTLLFGYLIFSTFYFKSKKIEYQFGELLCSIFPTIILLMQMVPSLSLLYYYGLMNLDSNLTVKVTGHQWYWSYEYSDIPGLEFDSYMKSLDQLNLGEPRLLEVDNRCVIPCDTNIRFCITSADVIHAWALNSLSVKLDAMSGILSTFSYSFPMVGVFYGQCSEICGANHSFMPIALEVTLLDNFKSWCFGTME</sequence>
<gene>
    <name type="primary">cox-2</name>
    <name type="synonym">coII</name>
</gene>
<evidence type="ECO:0000250" key="1">
    <source>
        <dbReference type="UniProtKB" id="P00410"/>
    </source>
</evidence>
<evidence type="ECO:0000255" key="2"/>
<evidence type="ECO:0000269" key="3">
    <source>
    </source>
</evidence>
<evidence type="ECO:0000269" key="4">
    <source>
    </source>
</evidence>
<evidence type="ECO:0000269" key="5">
    <source ref="5"/>
</evidence>
<evidence type="ECO:0000305" key="6"/>
<evidence type="ECO:0000312" key="7">
    <source>
        <dbReference type="EMBL" id="AAO13510.1"/>
    </source>
</evidence>
<organism evidence="7">
    <name type="scientific">Caenorhabditis briggsae</name>
    <dbReference type="NCBI Taxonomy" id="6238"/>
    <lineage>
        <taxon>Eukaryota</taxon>
        <taxon>Metazoa</taxon>
        <taxon>Ecdysozoa</taxon>
        <taxon>Nematoda</taxon>
        <taxon>Chromadorea</taxon>
        <taxon>Rhabditida</taxon>
        <taxon>Rhabditina</taxon>
        <taxon>Rhabditomorpha</taxon>
        <taxon>Rhabditoidea</taxon>
        <taxon>Rhabditidae</taxon>
        <taxon>Peloderinae</taxon>
        <taxon>Caenorhabditis</taxon>
    </lineage>
</organism>
<name>COX2_CAEBR</name>
<feature type="chain" id="PRO_0000183525" description="Cytochrome c oxidase subunit 2">
    <location>
        <begin position="1"/>
        <end position="231"/>
    </location>
</feature>
<feature type="topological domain" description="Mitochondrial intermembrane" evidence="2">
    <location>
        <begin position="1"/>
        <end position="30"/>
    </location>
</feature>
<feature type="transmembrane region" description="Helical" evidence="2">
    <location>
        <begin position="31"/>
        <end position="51"/>
    </location>
</feature>
<feature type="topological domain" description="Mitochondrial matrix" evidence="2">
    <location>
        <begin position="52"/>
        <end position="64"/>
    </location>
</feature>
<feature type="transmembrane region" description="Helical" evidence="2">
    <location>
        <begin position="65"/>
        <end position="85"/>
    </location>
</feature>
<feature type="topological domain" description="Mitochondrial intermembrane" evidence="2">
    <location>
        <begin position="86"/>
        <end position="231"/>
    </location>
</feature>
<feature type="binding site" evidence="1">
    <location>
        <position position="164"/>
    </location>
    <ligand>
        <name>Cu cation</name>
        <dbReference type="ChEBI" id="CHEBI:23378"/>
        <label>A1</label>
    </ligand>
</feature>
<feature type="binding site" evidence="1">
    <location>
        <position position="199"/>
    </location>
    <ligand>
        <name>Cu cation</name>
        <dbReference type="ChEBI" id="CHEBI:23378"/>
        <label>A1</label>
    </ligand>
</feature>
<feature type="binding site" evidence="1">
    <location>
        <position position="199"/>
    </location>
    <ligand>
        <name>Cu cation</name>
        <dbReference type="ChEBI" id="CHEBI:23378"/>
        <label>A2</label>
    </ligand>
</feature>
<feature type="binding site" evidence="1">
    <location>
        <position position="201"/>
    </location>
    <ligand>
        <name>Cu cation</name>
        <dbReference type="ChEBI" id="CHEBI:23378"/>
        <label>A2</label>
    </ligand>
</feature>
<feature type="binding site" evidence="1">
    <location>
        <position position="201"/>
    </location>
    <ligand>
        <name>Mg(2+)</name>
        <dbReference type="ChEBI" id="CHEBI:18420"/>
        <note>ligand shared with subunit 1</note>
    </ligand>
</feature>
<feature type="binding site" evidence="1">
    <location>
        <position position="203"/>
    </location>
    <ligand>
        <name>Cu cation</name>
        <dbReference type="ChEBI" id="CHEBI:23378"/>
        <label>A1</label>
    </ligand>
</feature>
<feature type="binding site" evidence="1">
    <location>
        <position position="203"/>
    </location>
    <ligand>
        <name>Cu cation</name>
        <dbReference type="ChEBI" id="CHEBI:23378"/>
        <label>A2</label>
    </ligand>
</feature>
<feature type="binding site" evidence="1">
    <location>
        <position position="207"/>
    </location>
    <ligand>
        <name>Cu cation</name>
        <dbReference type="ChEBI" id="CHEBI:23378"/>
        <label>A2</label>
    </ligand>
</feature>
<feature type="binding site" evidence="1">
    <location>
        <position position="210"/>
    </location>
    <ligand>
        <name>Cu cation</name>
        <dbReference type="ChEBI" id="CHEBI:23378"/>
        <label>A1</label>
    </ligand>
</feature>
<feature type="sequence variant" description="In strain: PB826." evidence="3 4 5">
    <original>L</original>
    <variation>M</variation>
    <location>
        <position position="16"/>
    </location>
</feature>
<feature type="sequence variant" description="In strain: ED3092 and ED3101." evidence="4">
    <original>M</original>
    <variation>T</variation>
    <location>
        <position position="21"/>
    </location>
</feature>
<feature type="sequence variant" description="In strain: BW287." evidence="4">
    <original>Q</original>
    <variation>L</variation>
    <location>
        <position position="61"/>
    </location>
</feature>
<feature type="sequence variant" description="In strain: JU403." evidence="4">
    <original>V</original>
    <variation>A</variation>
    <location>
        <position position="141"/>
    </location>
</feature>
<feature type="sequence variant" description="In strain: EG4207A." evidence="4">
    <original>D</original>
    <variation>H</variation>
    <location>
        <position position="142"/>
    </location>
</feature>